<sequence>MAQELAAPLSCGQPPGQNITETTTDPWDEGDLRFEPSNSMVHSFSSSSESNLSLSVGYFPCEDTLSCEDTLSCEDSSSEGPSMHFVPPIQGSWRTENTGRLLARRDQIQDDPEQFCKLSITLAWDVDMASNNSDSTTNCDLSGDNKDKHPKEKTQLTLSKLDGLVQKLEKFLENQKDDKDDDSVFPESAQEEDSQLPSSSLPGMAQVSHQEYGSCQDLAKFNPLENEDVNQFPQIHPRLQNQELAKIISKATGSQGTDIAEISSVLPGPPEKEDTHSSTGALSCLNFRWVFRWLRPQVRSSLLGREDPREANERPRELARKKRFSYRSKRIQPQESFELGHPIPPDF</sequence>
<protein>
    <recommendedName>
        <fullName>Uncharacterized protein C12orf71 homolog</fullName>
    </recommendedName>
</protein>
<reference key="1">
    <citation type="submission" date="2005-11" db="EMBL/GenBank/DDBJ databases">
        <authorList>
            <consortium name="NIH - Mammalian Gene Collection (MGC) project"/>
        </authorList>
    </citation>
    <scope>NUCLEOTIDE SEQUENCE [LARGE SCALE MRNA]</scope>
    <source>
        <strain>Crossbred X Angus</strain>
        <tissue>Liver</tissue>
    </source>
</reference>
<proteinExistence type="evidence at transcript level"/>
<evidence type="ECO:0000256" key="1">
    <source>
        <dbReference type="SAM" id="MobiDB-lite"/>
    </source>
</evidence>
<evidence type="ECO:0000305" key="2"/>
<comment type="sequence caution" evidence="2">
    <conflict type="erroneous initiation">
        <sequence resource="EMBL-CDS" id="AAI09560"/>
    </conflict>
</comment>
<keyword id="KW-1185">Reference proteome</keyword>
<dbReference type="EMBL" id="BC109559">
    <property type="protein sequence ID" value="AAI09560.1"/>
    <property type="status" value="ALT_INIT"/>
    <property type="molecule type" value="mRNA"/>
</dbReference>
<dbReference type="SMR" id="Q32LI3"/>
<dbReference type="PaxDb" id="9913-ENSBTAP00000003598"/>
<dbReference type="eggNOG" id="ENOG502RTYV">
    <property type="taxonomic scope" value="Eukaryota"/>
</dbReference>
<dbReference type="InParanoid" id="Q32LI3"/>
<dbReference type="Proteomes" id="UP000009136">
    <property type="component" value="Unplaced"/>
</dbReference>
<dbReference type="InterPro" id="IPR027908">
    <property type="entry name" value="DUF4640"/>
</dbReference>
<dbReference type="PANTHER" id="PTHR36462">
    <property type="entry name" value="CHROMOSOME 12 OPEN READING FRAME 71"/>
    <property type="match status" value="1"/>
</dbReference>
<dbReference type="PANTHER" id="PTHR36462:SF1">
    <property type="entry name" value="CHROMOSOME 12 OPEN READING FRAME 71"/>
    <property type="match status" value="1"/>
</dbReference>
<dbReference type="Pfam" id="PF15480">
    <property type="entry name" value="DUF4640"/>
    <property type="match status" value="1"/>
</dbReference>
<name>CL071_BOVIN</name>
<accession>Q32LI3</accession>
<organism>
    <name type="scientific">Bos taurus</name>
    <name type="common">Bovine</name>
    <dbReference type="NCBI Taxonomy" id="9913"/>
    <lineage>
        <taxon>Eukaryota</taxon>
        <taxon>Metazoa</taxon>
        <taxon>Chordata</taxon>
        <taxon>Craniata</taxon>
        <taxon>Vertebrata</taxon>
        <taxon>Euteleostomi</taxon>
        <taxon>Mammalia</taxon>
        <taxon>Eutheria</taxon>
        <taxon>Laurasiatheria</taxon>
        <taxon>Artiodactyla</taxon>
        <taxon>Ruminantia</taxon>
        <taxon>Pecora</taxon>
        <taxon>Bovidae</taxon>
        <taxon>Bovinae</taxon>
        <taxon>Bos</taxon>
    </lineage>
</organism>
<feature type="chain" id="PRO_0000343576" description="Uncharacterized protein C12orf71 homolog">
    <location>
        <begin position="1"/>
        <end position="347"/>
    </location>
</feature>
<feature type="region of interest" description="Disordered" evidence="1">
    <location>
        <begin position="1"/>
        <end position="40"/>
    </location>
</feature>
<feature type="region of interest" description="Disordered" evidence="1">
    <location>
        <begin position="72"/>
        <end position="92"/>
    </location>
</feature>
<feature type="region of interest" description="Disordered" evidence="1">
    <location>
        <begin position="133"/>
        <end position="158"/>
    </location>
</feature>
<feature type="region of interest" description="Disordered" evidence="1">
    <location>
        <begin position="173"/>
        <end position="209"/>
    </location>
</feature>
<feature type="region of interest" description="Disordered" evidence="1">
    <location>
        <begin position="306"/>
        <end position="347"/>
    </location>
</feature>
<feature type="compositionally biased region" description="Polar residues" evidence="1">
    <location>
        <begin position="15"/>
        <end position="25"/>
    </location>
</feature>
<feature type="compositionally biased region" description="Basic and acidic residues" evidence="1">
    <location>
        <begin position="143"/>
        <end position="154"/>
    </location>
</feature>
<feature type="compositionally biased region" description="Acidic residues" evidence="1">
    <location>
        <begin position="179"/>
        <end position="194"/>
    </location>
</feature>
<feature type="compositionally biased region" description="Polar residues" evidence="1">
    <location>
        <begin position="195"/>
        <end position="209"/>
    </location>
</feature>
<feature type="compositionally biased region" description="Basic and acidic residues" evidence="1">
    <location>
        <begin position="306"/>
        <end position="318"/>
    </location>
</feature>
<feature type="compositionally biased region" description="Basic residues" evidence="1">
    <location>
        <begin position="319"/>
        <end position="330"/>
    </location>
</feature>